<dbReference type="EMBL" id="Y12425">
    <property type="protein sequence ID" value="CAA73035.1"/>
    <property type="molecule type" value="mRNA"/>
</dbReference>
<dbReference type="SMR" id="O24169"/>
<dbReference type="Allergome" id="3383">
    <property type="allergen name" value="Ole e 2.0101"/>
</dbReference>
<dbReference type="Allergome" id="490">
    <property type="allergen name" value="Ole e 2"/>
</dbReference>
<dbReference type="GO" id="GO:0005938">
    <property type="term" value="C:cell cortex"/>
    <property type="evidence" value="ECO:0007669"/>
    <property type="project" value="TreeGrafter"/>
</dbReference>
<dbReference type="GO" id="GO:0005856">
    <property type="term" value="C:cytoskeleton"/>
    <property type="evidence" value="ECO:0007669"/>
    <property type="project" value="UniProtKB-SubCell"/>
</dbReference>
<dbReference type="GO" id="GO:0003785">
    <property type="term" value="F:actin monomer binding"/>
    <property type="evidence" value="ECO:0007669"/>
    <property type="project" value="TreeGrafter"/>
</dbReference>
<dbReference type="CDD" id="cd00148">
    <property type="entry name" value="PROF"/>
    <property type="match status" value="1"/>
</dbReference>
<dbReference type="FunFam" id="3.30.450.30:FF:000001">
    <property type="entry name" value="Profilin"/>
    <property type="match status" value="1"/>
</dbReference>
<dbReference type="Gene3D" id="3.30.450.30">
    <property type="entry name" value="Dynein light chain 2a, cytoplasmic"/>
    <property type="match status" value="1"/>
</dbReference>
<dbReference type="InterPro" id="IPR048278">
    <property type="entry name" value="PFN"/>
</dbReference>
<dbReference type="InterPro" id="IPR005455">
    <property type="entry name" value="PFN_euk"/>
</dbReference>
<dbReference type="InterPro" id="IPR036140">
    <property type="entry name" value="PFN_sf"/>
</dbReference>
<dbReference type="InterPro" id="IPR027310">
    <property type="entry name" value="Profilin_CS"/>
</dbReference>
<dbReference type="PANTHER" id="PTHR11604">
    <property type="entry name" value="PROFILIN"/>
    <property type="match status" value="1"/>
</dbReference>
<dbReference type="PANTHER" id="PTHR11604:SF25">
    <property type="entry name" value="PROFILIN-5"/>
    <property type="match status" value="1"/>
</dbReference>
<dbReference type="Pfam" id="PF00235">
    <property type="entry name" value="Profilin"/>
    <property type="match status" value="1"/>
</dbReference>
<dbReference type="PRINTS" id="PR00392">
    <property type="entry name" value="PROFILIN"/>
</dbReference>
<dbReference type="PRINTS" id="PR01640">
    <property type="entry name" value="PROFILINPLNT"/>
</dbReference>
<dbReference type="SMART" id="SM00392">
    <property type="entry name" value="PROF"/>
    <property type="match status" value="1"/>
</dbReference>
<dbReference type="SUPFAM" id="SSF55770">
    <property type="entry name" value="Profilin (actin-binding protein)"/>
    <property type="match status" value="1"/>
</dbReference>
<dbReference type="PROSITE" id="PS00414">
    <property type="entry name" value="PROFILIN"/>
    <property type="match status" value="1"/>
</dbReference>
<reference key="1">
    <citation type="journal article" date="1997" name="J. Allergy Clin. Immunol.">
        <title>Cloning and expression of the panallergen profilin and the major allergen (Ole e 1) from olive tree pollen.</title>
        <authorList>
            <person name="Asturias J.A."/>
            <person name="Arilla M.C."/>
            <person name="Gomez-Bayon N."/>
            <person name="Martinez J."/>
            <person name="Martinez A."/>
            <person name="Palacios R."/>
        </authorList>
    </citation>
    <scope>NUCLEOTIDE SEQUENCE [MRNA]</scope>
    <scope>ALLERGEN</scope>
    <source>
        <tissue>Pollen</tissue>
    </source>
</reference>
<reference key="2">
    <citation type="journal article" date="2012" name="PLoS ONE">
        <title>Characterization of profilin polymorphism in pollen with a focus on multifunctionality.</title>
        <authorList>
            <person name="Jimenez-Lopez J.C."/>
            <person name="Morales S."/>
            <person name="Castro A.J."/>
            <person name="Volkmann D."/>
            <person name="Rodriguez-Garcia M.I."/>
            <person name="Alche Jde D."/>
        </authorList>
    </citation>
    <scope>POLYMORPHISM</scope>
</reference>
<reference key="3">
    <citation type="journal article" date="2013" name="PLoS ONE">
        <title>Analysis of the effects of polymorphism on pollen profilin structural functionality and the generation of conformational, T- and B-cell epitopes.</title>
        <authorList>
            <person name="Jimenez-Lopez J.C."/>
            <person name="Rodriguez-Garcia M.I."/>
            <person name="Alche J.D."/>
        </authorList>
    </citation>
    <scope>3D-STRUCTURE MODELING</scope>
    <scope>DISULFIDE BOND</scope>
</reference>
<reference key="4">
    <citation type="journal article" date="2012" name="Talanta">
        <title>Analysis of olive allergens.</title>
        <authorList>
            <person name="Esteve C."/>
            <person name="Montealegre C."/>
            <person name="Marina M.L."/>
            <person name="Garcia M.C."/>
        </authorList>
    </citation>
    <scope>REVIEW</scope>
    <scope>NOMENCLATURE</scope>
</reference>
<sequence length="134" mass="14489">MSWQAYVDDHLMCDIEGHEDHRLTAAAIVGHDGSVWAQSATFPQFKPEEMNGIMTDFNEPGHLAPTGLHLGGTKYMVIQGEAGAVIRGKKGSGGITIKKTGQALVFGIYEEPVTPGQCNMVVERLGDYLVEQGM</sequence>
<feature type="initiator methionine" description="Removed" evidence="1">
    <location>
        <position position="1"/>
    </location>
</feature>
<feature type="chain" id="PRO_0000199656" description="Profilin-1">
    <location>
        <begin position="2"/>
        <end position="134"/>
    </location>
</feature>
<feature type="short sequence motif" description="Involved in PIP2 interaction">
    <location>
        <begin position="84"/>
        <end position="100"/>
    </location>
</feature>
<feature type="modified residue" description="Phosphothreonine" evidence="1">
    <location>
        <position position="114"/>
    </location>
</feature>
<feature type="disulfide bond" evidence="4">
    <location>
        <begin position="13"/>
        <end position="118"/>
    </location>
</feature>
<name>PROFA_OLEEU</name>
<gene>
    <name type="primary">PRO1</name>
</gene>
<comment type="function">
    <text evidence="1">Binds to actin and affects the structure of the cytoskeleton. At high concentrations, profilin prevents the polymerization of actin, whereas it enhances it at low concentrations. By binding to PIP2, it inhibits the formation of IP3 and DG (By similarity).</text>
</comment>
<comment type="subunit">
    <text>Occurs in many kinds of cells as a complex with monomeric actin in a 1:1 ratio.</text>
</comment>
<comment type="subcellular location">
    <subcellularLocation>
        <location evidence="1">Cytoplasm</location>
        <location evidence="1">Cytoskeleton</location>
    </subcellularLocation>
</comment>
<comment type="PTM">
    <text evidence="1">Phosphorylated by MAP kinases.</text>
</comment>
<comment type="polymorphism">
    <text>Several isoforms of the allergen exist due to polymorphism.</text>
</comment>
<comment type="allergen">
    <text evidence="2">Causes an allergic reaction in human.</text>
</comment>
<comment type="miscellaneous">
    <text evidence="4">The variability of the residues taking part of IgE-binding epitopes might be responsible of the difference in cross-reactivity among olive pollen cultivars, and between distantly related pollen species, leading to a variable range of allergy reactions among atopic patients.</text>
</comment>
<comment type="similarity">
    <text evidence="3">Belongs to the profilin family.</text>
</comment>
<protein>
    <recommendedName>
        <fullName>Profilin-1</fullName>
    </recommendedName>
    <alternativeName>
        <fullName>Pollen allergen Ole e 2</fullName>
    </alternativeName>
    <allergenName>Ole e 2</allergenName>
</protein>
<organism>
    <name type="scientific">Olea europaea</name>
    <name type="common">Common olive</name>
    <dbReference type="NCBI Taxonomy" id="4146"/>
    <lineage>
        <taxon>Eukaryota</taxon>
        <taxon>Viridiplantae</taxon>
        <taxon>Streptophyta</taxon>
        <taxon>Embryophyta</taxon>
        <taxon>Tracheophyta</taxon>
        <taxon>Spermatophyta</taxon>
        <taxon>Magnoliopsida</taxon>
        <taxon>eudicotyledons</taxon>
        <taxon>Gunneridae</taxon>
        <taxon>Pentapetalae</taxon>
        <taxon>asterids</taxon>
        <taxon>lamiids</taxon>
        <taxon>Lamiales</taxon>
        <taxon>Oleaceae</taxon>
        <taxon>Oleeae</taxon>
        <taxon>Olea</taxon>
    </lineage>
</organism>
<keyword id="KW-0009">Actin-binding</keyword>
<keyword id="KW-0020">Allergen</keyword>
<keyword id="KW-0963">Cytoplasm</keyword>
<keyword id="KW-0206">Cytoskeleton</keyword>
<keyword id="KW-1015">Disulfide bond</keyword>
<keyword id="KW-0597">Phosphoprotein</keyword>
<evidence type="ECO:0000250" key="1"/>
<evidence type="ECO:0000269" key="2">
    <source>
    </source>
</evidence>
<evidence type="ECO:0000305" key="3"/>
<evidence type="ECO:0000305" key="4">
    <source>
    </source>
</evidence>
<proteinExistence type="evidence at protein level"/>
<accession>O24169</accession>